<keyword id="KW-0025">Alternative splicing</keyword>
<keyword id="KW-0507">mRNA processing</keyword>
<keyword id="KW-0508">mRNA splicing</keyword>
<keyword id="KW-0539">Nucleus</keyword>
<keyword id="KW-0597">Phosphoprotein</keyword>
<keyword id="KW-1185">Reference proteome</keyword>
<keyword id="KW-0677">Repeat</keyword>
<keyword id="KW-0694">RNA-binding</keyword>
<keyword id="KW-0747">Spliceosome</keyword>
<dbReference type="EMBL" id="X99437">
    <property type="protein sequence ID" value="CAA67800.1"/>
    <property type="molecule type" value="mRNA"/>
</dbReference>
<dbReference type="EMBL" id="U76607">
    <property type="protein sequence ID" value="AAB18813.1"/>
    <property type="molecule type" value="mRNA"/>
</dbReference>
<dbReference type="EMBL" id="AL022197">
    <property type="protein sequence ID" value="CAA18176.1"/>
    <property type="molecule type" value="Genomic_DNA"/>
</dbReference>
<dbReference type="EMBL" id="CP002687">
    <property type="protein sequence ID" value="AEE85067.1"/>
    <property type="molecule type" value="Genomic_DNA"/>
</dbReference>
<dbReference type="EMBL" id="CP002687">
    <property type="protein sequence ID" value="AEE85069.1"/>
    <property type="molecule type" value="Genomic_DNA"/>
</dbReference>
<dbReference type="EMBL" id="CP002687">
    <property type="protein sequence ID" value="AEE85070.1"/>
    <property type="molecule type" value="Genomic_DNA"/>
</dbReference>
<dbReference type="EMBL" id="CP002687">
    <property type="protein sequence ID" value="ANM66707.1"/>
    <property type="molecule type" value="Genomic_DNA"/>
</dbReference>
<dbReference type="EMBL" id="AK317023">
    <property type="protein sequence ID" value="BAH19717.1"/>
    <property type="molecule type" value="mRNA"/>
</dbReference>
<dbReference type="EMBL" id="AK317405">
    <property type="protein sequence ID" value="BAH20075.1"/>
    <property type="molecule type" value="mRNA"/>
</dbReference>
<dbReference type="PIR" id="T05797">
    <property type="entry name" value="T05797"/>
</dbReference>
<dbReference type="RefSeq" id="NP_001078447.1">
    <molecule id="P92965-2"/>
    <property type="nucleotide sequence ID" value="NM_001084978.3"/>
</dbReference>
<dbReference type="RefSeq" id="NP_001190837.1">
    <molecule id="P92965-1"/>
    <property type="nucleotide sequence ID" value="NM_001203908.1"/>
</dbReference>
<dbReference type="RefSeq" id="NP_001328587.1">
    <molecule id="P92965-2"/>
    <property type="nucleotide sequence ID" value="NM_001341747.1"/>
</dbReference>
<dbReference type="RefSeq" id="NP_194280.1">
    <molecule id="P92965-1"/>
    <property type="nucleotide sequence ID" value="NM_118682.4"/>
</dbReference>
<dbReference type="SMR" id="P92965"/>
<dbReference type="BioGRID" id="13941">
    <property type="interactions" value="16"/>
</dbReference>
<dbReference type="FunCoup" id="P92965">
    <property type="interactions" value="152"/>
</dbReference>
<dbReference type="IntAct" id="P92965">
    <property type="interactions" value="2"/>
</dbReference>
<dbReference type="STRING" id="3702.P92965"/>
<dbReference type="iPTMnet" id="P92965"/>
<dbReference type="PaxDb" id="3702-AT4G25500.4"/>
<dbReference type="ProteomicsDB" id="226570">
    <molecule id="P92965-1"/>
</dbReference>
<dbReference type="EnsemblPlants" id="AT4G25500.1">
    <molecule id="P92965-1"/>
    <property type="protein sequence ID" value="AT4G25500.1"/>
    <property type="gene ID" value="AT4G25500"/>
</dbReference>
<dbReference type="EnsemblPlants" id="AT4G25500.3">
    <molecule id="P92965-2"/>
    <property type="protein sequence ID" value="AT4G25500.3"/>
    <property type="gene ID" value="AT4G25500"/>
</dbReference>
<dbReference type="EnsemblPlants" id="AT4G25500.4">
    <molecule id="P92965-1"/>
    <property type="protein sequence ID" value="AT4G25500.4"/>
    <property type="gene ID" value="AT4G25500"/>
</dbReference>
<dbReference type="EnsemblPlants" id="AT4G25500.6">
    <molecule id="P92965-2"/>
    <property type="protein sequence ID" value="AT4G25500.6"/>
    <property type="gene ID" value="AT4G25500"/>
</dbReference>
<dbReference type="GeneID" id="828654"/>
<dbReference type="Gramene" id="AT4G25500.1">
    <molecule id="P92965-1"/>
    <property type="protein sequence ID" value="AT4G25500.1"/>
    <property type="gene ID" value="AT4G25500"/>
</dbReference>
<dbReference type="Gramene" id="AT4G25500.3">
    <molecule id="P92965-2"/>
    <property type="protein sequence ID" value="AT4G25500.3"/>
    <property type="gene ID" value="AT4G25500"/>
</dbReference>
<dbReference type="Gramene" id="AT4G25500.4">
    <molecule id="P92965-1"/>
    <property type="protein sequence ID" value="AT4G25500.4"/>
    <property type="gene ID" value="AT4G25500"/>
</dbReference>
<dbReference type="Gramene" id="AT4G25500.6">
    <molecule id="P92965-2"/>
    <property type="protein sequence ID" value="AT4G25500.6"/>
    <property type="gene ID" value="AT4G25500"/>
</dbReference>
<dbReference type="KEGG" id="ath:AT4G25500"/>
<dbReference type="Araport" id="AT4G25500"/>
<dbReference type="TAIR" id="AT4G25500">
    <property type="gene designation" value="RS40"/>
</dbReference>
<dbReference type="eggNOG" id="KOG0106">
    <property type="taxonomic scope" value="Eukaryota"/>
</dbReference>
<dbReference type="HOGENOM" id="CLU_043462_3_0_1"/>
<dbReference type="InParanoid" id="P92965"/>
<dbReference type="OMA" id="NITHFPH"/>
<dbReference type="PhylomeDB" id="P92965"/>
<dbReference type="PRO" id="PR:P92965"/>
<dbReference type="Proteomes" id="UP000006548">
    <property type="component" value="Chromosome 4"/>
</dbReference>
<dbReference type="ExpressionAtlas" id="P92965">
    <property type="expression patterns" value="baseline and differential"/>
</dbReference>
<dbReference type="GO" id="GO:0010445">
    <property type="term" value="C:nuclear dicing body"/>
    <property type="evidence" value="ECO:0000314"/>
    <property type="project" value="TAIR"/>
</dbReference>
<dbReference type="GO" id="GO:0016607">
    <property type="term" value="C:nuclear speck"/>
    <property type="evidence" value="ECO:0000314"/>
    <property type="project" value="TAIR"/>
</dbReference>
<dbReference type="GO" id="GO:0005681">
    <property type="term" value="C:spliceosomal complex"/>
    <property type="evidence" value="ECO:0000250"/>
    <property type="project" value="TAIR"/>
</dbReference>
<dbReference type="GO" id="GO:0003723">
    <property type="term" value="F:RNA binding"/>
    <property type="evidence" value="ECO:0007669"/>
    <property type="project" value="UniProtKB-KW"/>
</dbReference>
<dbReference type="GO" id="GO:0000398">
    <property type="term" value="P:mRNA splicing, via spliceosome"/>
    <property type="evidence" value="ECO:0000250"/>
    <property type="project" value="TAIR"/>
</dbReference>
<dbReference type="GO" id="GO:0031053">
    <property type="term" value="P:primary miRNA processing"/>
    <property type="evidence" value="ECO:0000316"/>
    <property type="project" value="TAIR"/>
</dbReference>
<dbReference type="GO" id="GO:0008380">
    <property type="term" value="P:RNA splicing"/>
    <property type="evidence" value="ECO:0000303"/>
    <property type="project" value="TAIR"/>
</dbReference>
<dbReference type="CDD" id="cd12234">
    <property type="entry name" value="RRM1_AtRSp31_like"/>
    <property type="match status" value="1"/>
</dbReference>
<dbReference type="FunFam" id="3.30.70.330:FF:000294">
    <property type="entry name" value="Serine/arginine-rich splicing factor RS31"/>
    <property type="match status" value="1"/>
</dbReference>
<dbReference type="FunFam" id="3.30.70.330:FF:000299">
    <property type="entry name" value="Serine/arginine-rich splicing factor RS31"/>
    <property type="match status" value="1"/>
</dbReference>
<dbReference type="Gene3D" id="3.30.70.330">
    <property type="match status" value="2"/>
</dbReference>
<dbReference type="InterPro" id="IPR012677">
    <property type="entry name" value="Nucleotide-bd_a/b_plait_sf"/>
</dbReference>
<dbReference type="InterPro" id="IPR035979">
    <property type="entry name" value="RBD_domain_sf"/>
</dbReference>
<dbReference type="InterPro" id="IPR000504">
    <property type="entry name" value="RRM_dom"/>
</dbReference>
<dbReference type="InterPro" id="IPR050907">
    <property type="entry name" value="SRSF"/>
</dbReference>
<dbReference type="PANTHER" id="PTHR23147">
    <property type="entry name" value="SERINE/ARGININE RICH SPLICING FACTOR"/>
    <property type="match status" value="1"/>
</dbReference>
<dbReference type="Pfam" id="PF00076">
    <property type="entry name" value="RRM_1"/>
    <property type="match status" value="2"/>
</dbReference>
<dbReference type="SMART" id="SM00360">
    <property type="entry name" value="RRM"/>
    <property type="match status" value="2"/>
</dbReference>
<dbReference type="SUPFAM" id="SSF54928">
    <property type="entry name" value="RNA-binding domain, RBD"/>
    <property type="match status" value="1"/>
</dbReference>
<dbReference type="PROSITE" id="PS50102">
    <property type="entry name" value="RRM"/>
    <property type="match status" value="2"/>
</dbReference>
<name>RS40_ARATH</name>
<protein>
    <recommendedName>
        <fullName>Serine/arginine-rich splicing factor RS40</fullName>
        <shortName>At-RSp40</shortName>
        <shortName>AtRS40</shortName>
    </recommendedName>
</protein>
<feature type="chain" id="PRO_0000081878" description="Serine/arginine-rich splicing factor RS40">
    <location>
        <begin position="1"/>
        <end position="350"/>
    </location>
</feature>
<feature type="domain" description="RRM 1" evidence="5">
    <location>
        <begin position="2"/>
        <end position="74"/>
    </location>
</feature>
<feature type="domain" description="RRM 2" evidence="5">
    <location>
        <begin position="97"/>
        <end position="168"/>
    </location>
</feature>
<feature type="region of interest" description="Disordered" evidence="6">
    <location>
        <begin position="73"/>
        <end position="94"/>
    </location>
</feature>
<feature type="region of interest" description="Disordered" evidence="6">
    <location>
        <begin position="167"/>
        <end position="350"/>
    </location>
</feature>
<feature type="compositionally biased region" description="Basic and acidic residues" evidence="6">
    <location>
        <begin position="73"/>
        <end position="82"/>
    </location>
</feature>
<feature type="compositionally biased region" description="Basic and acidic residues" evidence="6">
    <location>
        <begin position="167"/>
        <end position="187"/>
    </location>
</feature>
<feature type="compositionally biased region" description="Basic and acidic residues" evidence="6">
    <location>
        <begin position="216"/>
        <end position="227"/>
    </location>
</feature>
<feature type="compositionally biased region" description="Basic and acidic residues" evidence="6">
    <location>
        <begin position="240"/>
        <end position="255"/>
    </location>
</feature>
<feature type="compositionally biased region" description="Basic and acidic residues" evidence="6">
    <location>
        <begin position="272"/>
        <end position="289"/>
    </location>
</feature>
<feature type="compositionally biased region" description="Basic and acidic residues" evidence="6">
    <location>
        <begin position="299"/>
        <end position="308"/>
    </location>
</feature>
<feature type="modified residue" description="Phosphoserine" evidence="1">
    <location>
        <position position="193"/>
    </location>
</feature>
<feature type="modified residue" description="Phosphoserine" evidence="1">
    <location>
        <position position="195"/>
    </location>
</feature>
<feature type="modified residue" description="Phosphoserine" evidence="19">
    <location>
        <position position="211"/>
    </location>
</feature>
<feature type="modified residue" description="Phosphoserine" evidence="1">
    <location>
        <position position="241"/>
    </location>
</feature>
<feature type="modified residue" description="Phosphoserine" evidence="19">
    <location>
        <position position="262"/>
    </location>
</feature>
<feature type="modified residue" description="Phosphoserine" evidence="4">
    <location>
        <position position="278"/>
    </location>
</feature>
<feature type="modified residue" description="Phosphoserine" evidence="18 19">
    <location>
        <position position="298"/>
    </location>
</feature>
<feature type="modified residue" description="Phosphoserine" evidence="3">
    <location>
        <position position="308"/>
    </location>
</feature>
<feature type="modified residue" description="Phosphoserine" evidence="2">
    <location>
        <position position="335"/>
    </location>
</feature>
<feature type="modified residue" description="Phosphoserine" evidence="2">
    <location>
        <position position="340"/>
    </location>
</feature>
<feature type="splice variant" id="VSP_054979" description="In isoform 3." evidence="15">
    <location>
        <begin position="1"/>
        <end position="41"/>
    </location>
</feature>
<feature type="splice variant" id="VSP_054980" description="In isoform 2." evidence="14">
    <original>MKPVFCGNFEYDAREGDLERLFRKYGKVERVDMKA</original>
    <variation>MQ</variation>
    <location>
        <begin position="1"/>
        <end position="35"/>
    </location>
</feature>
<feature type="sequence conflict" description="In Ref. 3; AAB18813." evidence="15" ref="3">
    <original>K</original>
    <variation>R</variation>
    <location>
        <position position="27"/>
    </location>
</feature>
<feature type="sequence conflict" description="In Ref. 3; AAB18813." evidence="15" ref="3">
    <original>K</original>
    <variation>R</variation>
    <location>
        <position position="63"/>
    </location>
</feature>
<feature type="sequence conflict" description="In Ref. 3; AAB18813." evidence="15" ref="3">
    <original>R</original>
    <variation>T</variation>
    <location>
        <position position="66"/>
    </location>
</feature>
<feature type="sequence conflict" description="In Ref. 8; BAH20075." evidence="15" ref="8">
    <original>E</original>
    <variation>K</variation>
    <location>
        <position position="139"/>
    </location>
</feature>
<feature type="sequence conflict" description="In Ref. 3; AAB18813." evidence="15" ref="3">
    <original>S</original>
    <variation>T</variation>
    <location>
        <position position="195"/>
    </location>
</feature>
<reference key="1">
    <citation type="journal article" date="1996" name="Plant Cell">
        <title>Characterization of a novel arginine/serine-rich splicing factor in Arabidopsis.</title>
        <authorList>
            <person name="Lopato S."/>
            <person name="Waigmann E."/>
            <person name="Barta A."/>
        </authorList>
    </citation>
    <scope>NUCLEOTIDE SEQUENCE [MRNA]</scope>
    <source>
        <strain>cv. Columbia</strain>
    </source>
</reference>
<reference key="2">
    <citation type="submission" date="1997-10" db="EMBL/GenBank/DDBJ databases">
        <authorList>
            <person name="Barta A."/>
        </authorList>
    </citation>
    <scope>SEQUENCE REVISION</scope>
</reference>
<reference key="3">
    <citation type="submission" date="1996-11" db="EMBL/GenBank/DDBJ databases">
        <authorList>
            <person name="Wintz H."/>
            <person name="Sakamoto W."/>
        </authorList>
    </citation>
    <scope>NUCLEOTIDE SEQUENCE [MRNA]</scope>
    <source>
        <strain>cv. Columbia</strain>
    </source>
</reference>
<reference key="4">
    <citation type="journal article" date="1999" name="Nature">
        <title>Sequence and analysis of chromosome 4 of the plant Arabidopsis thaliana.</title>
        <authorList>
            <person name="Mayer K.F.X."/>
            <person name="Schueller C."/>
            <person name="Wambutt R."/>
            <person name="Murphy G."/>
            <person name="Volckaert G."/>
            <person name="Pohl T."/>
            <person name="Duesterhoeft A."/>
            <person name="Stiekema W."/>
            <person name="Entian K.-D."/>
            <person name="Terryn N."/>
            <person name="Harris B."/>
            <person name="Ansorge W."/>
            <person name="Brandt P."/>
            <person name="Grivell L.A."/>
            <person name="Rieger M."/>
            <person name="Weichselgartner M."/>
            <person name="de Simone V."/>
            <person name="Obermaier B."/>
            <person name="Mache R."/>
            <person name="Mueller M."/>
            <person name="Kreis M."/>
            <person name="Delseny M."/>
            <person name="Puigdomenech P."/>
            <person name="Watson M."/>
            <person name="Schmidtheini T."/>
            <person name="Reichert B."/>
            <person name="Portetelle D."/>
            <person name="Perez-Alonso M."/>
            <person name="Boutry M."/>
            <person name="Bancroft I."/>
            <person name="Vos P."/>
            <person name="Hoheisel J."/>
            <person name="Zimmermann W."/>
            <person name="Wedler H."/>
            <person name="Ridley P."/>
            <person name="Langham S.-A."/>
            <person name="McCullagh B."/>
            <person name="Bilham L."/>
            <person name="Robben J."/>
            <person name="van der Schueren J."/>
            <person name="Grymonprez B."/>
            <person name="Chuang Y.-J."/>
            <person name="Vandenbussche F."/>
            <person name="Braeken M."/>
            <person name="Weltjens I."/>
            <person name="Voet M."/>
            <person name="Bastiaens I."/>
            <person name="Aert R."/>
            <person name="Defoor E."/>
            <person name="Weitzenegger T."/>
            <person name="Bothe G."/>
            <person name="Ramsperger U."/>
            <person name="Hilbert H."/>
            <person name="Braun M."/>
            <person name="Holzer E."/>
            <person name="Brandt A."/>
            <person name="Peters S."/>
            <person name="van Staveren M."/>
            <person name="Dirkse W."/>
            <person name="Mooijman P."/>
            <person name="Klein Lankhorst R."/>
            <person name="Rose M."/>
            <person name="Hauf J."/>
            <person name="Koetter P."/>
            <person name="Berneiser S."/>
            <person name="Hempel S."/>
            <person name="Feldpausch M."/>
            <person name="Lamberth S."/>
            <person name="Van den Daele H."/>
            <person name="De Keyser A."/>
            <person name="Buysshaert C."/>
            <person name="Gielen J."/>
            <person name="Villarroel R."/>
            <person name="De Clercq R."/>
            <person name="van Montagu M."/>
            <person name="Rogers J."/>
            <person name="Cronin A."/>
            <person name="Quail M.A."/>
            <person name="Bray-Allen S."/>
            <person name="Clark L."/>
            <person name="Doggett J."/>
            <person name="Hall S."/>
            <person name="Kay M."/>
            <person name="Lennard N."/>
            <person name="McLay K."/>
            <person name="Mayes R."/>
            <person name="Pettett A."/>
            <person name="Rajandream M.A."/>
            <person name="Lyne M."/>
            <person name="Benes V."/>
            <person name="Rechmann S."/>
            <person name="Borkova D."/>
            <person name="Bloecker H."/>
            <person name="Scharfe M."/>
            <person name="Grimm M."/>
            <person name="Loehnert T.-H."/>
            <person name="Dose S."/>
            <person name="de Haan M."/>
            <person name="Maarse A.C."/>
            <person name="Schaefer M."/>
            <person name="Mueller-Auer S."/>
            <person name="Gabel C."/>
            <person name="Fuchs M."/>
            <person name="Fartmann B."/>
            <person name="Granderath K."/>
            <person name="Dauner D."/>
            <person name="Herzl A."/>
            <person name="Neumann S."/>
            <person name="Argiriou A."/>
            <person name="Vitale D."/>
            <person name="Liguori R."/>
            <person name="Piravandi E."/>
            <person name="Massenet O."/>
            <person name="Quigley F."/>
            <person name="Clabauld G."/>
            <person name="Muendlein A."/>
            <person name="Felber R."/>
            <person name="Schnabl S."/>
            <person name="Hiller R."/>
            <person name="Schmidt W."/>
            <person name="Lecharny A."/>
            <person name="Aubourg S."/>
            <person name="Chefdor F."/>
            <person name="Cooke R."/>
            <person name="Berger C."/>
            <person name="Monfort A."/>
            <person name="Casacuberta E."/>
            <person name="Gibbons T."/>
            <person name="Weber N."/>
            <person name="Vandenbol M."/>
            <person name="Bargues M."/>
            <person name="Terol J."/>
            <person name="Torres A."/>
            <person name="Perez-Perez A."/>
            <person name="Purnelle B."/>
            <person name="Bent E."/>
            <person name="Johnson S."/>
            <person name="Tacon D."/>
            <person name="Jesse T."/>
            <person name="Heijnen L."/>
            <person name="Schwarz S."/>
            <person name="Scholler P."/>
            <person name="Heber S."/>
            <person name="Francs P."/>
            <person name="Bielke C."/>
            <person name="Frishman D."/>
            <person name="Haase D."/>
            <person name="Lemcke K."/>
            <person name="Mewes H.-W."/>
            <person name="Stocker S."/>
            <person name="Zaccaria P."/>
            <person name="Bevan M."/>
            <person name="Wilson R.K."/>
            <person name="de la Bastide M."/>
            <person name="Habermann K."/>
            <person name="Parnell L."/>
            <person name="Dedhia N."/>
            <person name="Gnoj L."/>
            <person name="Schutz K."/>
            <person name="Huang E."/>
            <person name="Spiegel L."/>
            <person name="Sekhon M."/>
            <person name="Murray J."/>
            <person name="Sheet P."/>
            <person name="Cordes M."/>
            <person name="Abu-Threideh J."/>
            <person name="Stoneking T."/>
            <person name="Kalicki J."/>
            <person name="Graves T."/>
            <person name="Harmon G."/>
            <person name="Edwards J."/>
            <person name="Latreille P."/>
            <person name="Courtney L."/>
            <person name="Cloud J."/>
            <person name="Abbott A."/>
            <person name="Scott K."/>
            <person name="Johnson D."/>
            <person name="Minx P."/>
            <person name="Bentley D."/>
            <person name="Fulton B."/>
            <person name="Miller N."/>
            <person name="Greco T."/>
            <person name="Kemp K."/>
            <person name="Kramer J."/>
            <person name="Fulton L."/>
            <person name="Mardis E."/>
            <person name="Dante M."/>
            <person name="Pepin K."/>
            <person name="Hillier L.W."/>
            <person name="Nelson J."/>
            <person name="Spieth J."/>
            <person name="Ryan E."/>
            <person name="Andrews S."/>
            <person name="Geisel C."/>
            <person name="Layman D."/>
            <person name="Du H."/>
            <person name="Ali J."/>
            <person name="Berghoff A."/>
            <person name="Jones K."/>
            <person name="Drone K."/>
            <person name="Cotton M."/>
            <person name="Joshu C."/>
            <person name="Antonoiu B."/>
            <person name="Zidanic M."/>
            <person name="Strong C."/>
            <person name="Sun H."/>
            <person name="Lamar B."/>
            <person name="Yordan C."/>
            <person name="Ma P."/>
            <person name="Zhong J."/>
            <person name="Preston R."/>
            <person name="Vil D."/>
            <person name="Shekher M."/>
            <person name="Matero A."/>
            <person name="Shah R."/>
            <person name="Swaby I.K."/>
            <person name="O'Shaughnessy A."/>
            <person name="Rodriguez M."/>
            <person name="Hoffman J."/>
            <person name="Till S."/>
            <person name="Granat S."/>
            <person name="Shohdy N."/>
            <person name="Hasegawa A."/>
            <person name="Hameed A."/>
            <person name="Lodhi M."/>
            <person name="Johnson A."/>
            <person name="Chen E."/>
            <person name="Marra M.A."/>
            <person name="Martienssen R."/>
            <person name="McCombie W.R."/>
        </authorList>
    </citation>
    <scope>NUCLEOTIDE SEQUENCE [LARGE SCALE GENOMIC DNA]</scope>
    <source>
        <strain>cv. Columbia</strain>
    </source>
</reference>
<reference key="5">
    <citation type="journal article" date="2017" name="Plant J.">
        <title>Araport11: a complete reannotation of the Arabidopsis thaliana reference genome.</title>
        <authorList>
            <person name="Cheng C.Y."/>
            <person name="Krishnakumar V."/>
            <person name="Chan A.P."/>
            <person name="Thibaud-Nissen F."/>
            <person name="Schobel S."/>
            <person name="Town C.D."/>
        </authorList>
    </citation>
    <scope>GENOME REANNOTATION</scope>
    <source>
        <strain>cv. Columbia</strain>
    </source>
</reference>
<reference key="6">
    <citation type="journal article" date="2004" name="Mol. Biol. Cell">
        <title>Use of fluorescent protein tags to study nuclear organization of the spliceosomal machinery in transiently transformed living plant cells.</title>
        <authorList>
            <person name="Lorkovic Z.J."/>
            <person name="Hilscher J."/>
            <person name="Barta A."/>
        </authorList>
    </citation>
    <scope>SUBCELLULAR LOCATION</scope>
</reference>
<reference key="7">
    <citation type="journal article" date="2005" name="RNA">
        <title>Evolutionary conservation of minor U12-type spliceosome between plants and humans.</title>
        <authorList>
            <person name="Lorkovic Z.J."/>
            <person name="Lehner R."/>
            <person name="Forstner C."/>
            <person name="Barta A."/>
        </authorList>
    </citation>
    <scope>INTERACTION WITH SNRNP35</scope>
</reference>
<reference key="8">
    <citation type="journal article" date="2009" name="DNA Res.">
        <title>Analysis of multiple occurrences of alternative splicing events in Arabidopsis thaliana using novel sequenced full-length cDNAs.</title>
        <authorList>
            <person name="Iida K."/>
            <person name="Fukami-Kobayashi K."/>
            <person name="Toyoda A."/>
            <person name="Sakaki Y."/>
            <person name="Kobayashi M."/>
            <person name="Seki M."/>
            <person name="Shinozaki K."/>
        </authorList>
    </citation>
    <scope>NUCLEOTIDE SEQUENCE [LARGE SCALE MRNA] (ISOFORM 2)</scope>
    <source>
        <strain>cv. Columbia</strain>
    </source>
</reference>
<reference key="9">
    <citation type="journal article" date="2006" name="Mol. Biol. Evol.">
        <title>Survey of conserved alternative splicing events of mRNAs encoding SR proteins in land plants.</title>
        <authorList>
            <person name="Iida K."/>
            <person name="Go M."/>
        </authorList>
    </citation>
    <scope>ALTERNATIVE SPLICING</scope>
</reference>
<reference key="10">
    <citation type="journal article" date="2006" name="Nucleic Acids Res.">
        <title>Evolutionary conservation and regulation of particular alternative splicing events in plant SR proteins.</title>
        <authorList>
            <person name="Kalyna M."/>
            <person name="Lopato S."/>
            <person name="Voronin V."/>
            <person name="Barta A."/>
        </authorList>
    </citation>
    <scope>ALTERNATIVE SPLICING</scope>
    <scope>TISSUE SPECIFICITY</scope>
</reference>
<reference key="11">
    <citation type="journal article" date="2006" name="RNA">
        <title>AtCyp59 is a multidomain cyclophilin from Arabidopsis thaliana that interacts with SR proteins and the C-terminal domain of the RNA polymerase II.</title>
        <authorList>
            <person name="Gullerova M."/>
            <person name="Barta A."/>
            <person name="Lorkovic Z.J."/>
        </authorList>
    </citation>
    <scope>INTERACTION WITH CYP59</scope>
</reference>
<reference key="12">
    <citation type="journal article" date="2007" name="Plant J.">
        <title>Alternative splicing of pre-mRNAs of Arabidopsis serine/arginine-rich proteins: regulation by hormones and stresses.</title>
        <authorList>
            <person name="Palusa S.G."/>
            <person name="Ali G.S."/>
            <person name="Reddy A.S."/>
        </authorList>
    </citation>
    <scope>ALTERNATIVE SPLICING</scope>
    <scope>INDUCTION</scope>
</reference>
<reference key="13">
    <citation type="journal article" date="2009" name="J. Proteomics">
        <title>Phosphoproteomic analysis of nuclei-enriched fractions from Arabidopsis thaliana.</title>
        <authorList>
            <person name="Jones A.M.E."/>
            <person name="MacLean D."/>
            <person name="Studholme D.J."/>
            <person name="Serna-Sanz A."/>
            <person name="Andreasson E."/>
            <person name="Rathjen J.P."/>
            <person name="Peck S.C."/>
        </authorList>
    </citation>
    <scope>SUBCELLULAR LOCATION</scope>
    <scope>PHOSPHORYLATION [LARGE SCALE ANALYSIS] AT SER-298</scope>
    <scope>IDENTIFICATION BY MASS SPECTROMETRY [LARGE SCALE ANALYSIS]</scope>
    <source>
        <strain>cv. Columbia</strain>
    </source>
</reference>
<reference key="14">
    <citation type="journal article" date="2009" name="Plant Physiol.">
        <title>Large-scale Arabidopsis phosphoproteome profiling reveals novel chloroplast kinase substrates and phosphorylation networks.</title>
        <authorList>
            <person name="Reiland S."/>
            <person name="Messerli G."/>
            <person name="Baerenfaller K."/>
            <person name="Gerrits B."/>
            <person name="Endler A."/>
            <person name="Grossmann J."/>
            <person name="Gruissem W."/>
            <person name="Baginsky S."/>
        </authorList>
    </citation>
    <scope>PHOSPHORYLATION [LARGE SCALE ANALYSIS] AT SER-211; SER-262 AND SER-298</scope>
    <scope>IDENTIFICATION BY MASS SPECTROMETRY [LARGE SCALE ANALYSIS]</scope>
</reference>
<reference key="15">
    <citation type="journal article" date="2010" name="Plant Cell">
        <title>Implementing a rational and consistent nomenclature for serine/arginine-rich protein splicing factors (SR proteins) in plants.</title>
        <authorList>
            <person name="Barta A."/>
            <person name="Kalyna M."/>
            <person name="Reddy A.S."/>
        </authorList>
    </citation>
    <scope>GENE FAMILY</scope>
    <scope>NOMENCLATURE</scope>
</reference>
<reference key="16">
    <citation type="journal article" date="2011" name="PLoS ONE">
        <title>Comparative analysis of serine/arginine-rich proteins across 27 eukaryotes: insights into sub-family classification and extent of alternative splicing.</title>
        <authorList>
            <person name="Richardson D.N."/>
            <person name="Rogers M.F."/>
            <person name="Labadorf A."/>
            <person name="Ben-Hur A."/>
            <person name="Guo H."/>
            <person name="Paterson A.H."/>
            <person name="Reddy A.S.N."/>
        </authorList>
    </citation>
    <scope>GENE FAMILY</scope>
</reference>
<reference key="17">
    <citation type="journal article" date="2013" name="PLoS Genet.">
        <title>A KH-domain RNA-binding protein interacts with FIERY2/CTD phosphatase-like 1 and splicing factors and is important for pre-mRNA splicing in Arabidopsis.</title>
        <authorList>
            <person name="Chen T."/>
            <person name="Cui P."/>
            <person name="Chen H."/>
            <person name="Ali S."/>
            <person name="Zhang S."/>
            <person name="Xiong L."/>
        </authorList>
    </citation>
    <scope>FUNCTION</scope>
    <scope>IDENTIFICATION BY MASS SPECTROMETRY</scope>
    <scope>INTERACTION WITH RCF3 AND CPL1</scope>
    <scope>SUBCELLULAR LOCATION</scope>
    <scope>DISRUPTION PHENOTYPE</scope>
</reference>
<reference key="18">
    <citation type="journal article" date="2015" name="Nucleic Acids Res.">
        <title>The RNA-binding protein HOS5 and serine/arginine-rich proteins RS40 and RS41 participate in miRNA biogenesis in Arabidopsis.</title>
        <authorList>
            <person name="Chen T."/>
            <person name="Cui P."/>
            <person name="Xiong L."/>
        </authorList>
    </citation>
    <scope>FUNCTION</scope>
    <scope>INTERACTION WITH DRB1/HYL1 AND SE</scope>
</reference>
<evidence type="ECO:0000250" key="1">
    <source>
        <dbReference type="UniProtKB" id="P92964"/>
    </source>
</evidence>
<evidence type="ECO:0000250" key="2">
    <source>
        <dbReference type="UniProtKB" id="P92966"/>
    </source>
</evidence>
<evidence type="ECO:0000250" key="3">
    <source>
        <dbReference type="UniProtKB" id="Q9FYB7"/>
    </source>
</evidence>
<evidence type="ECO:0000250" key="4">
    <source>
        <dbReference type="UniProtKB" id="Q9SJA6"/>
    </source>
</evidence>
<evidence type="ECO:0000255" key="5">
    <source>
        <dbReference type="PROSITE-ProRule" id="PRU00176"/>
    </source>
</evidence>
<evidence type="ECO:0000256" key="6">
    <source>
        <dbReference type="SAM" id="MobiDB-lite"/>
    </source>
</evidence>
<evidence type="ECO:0000269" key="7">
    <source>
    </source>
</evidence>
<evidence type="ECO:0000269" key="8">
    <source>
    </source>
</evidence>
<evidence type="ECO:0000269" key="9">
    <source>
    </source>
</evidence>
<evidence type="ECO:0000269" key="10">
    <source>
    </source>
</evidence>
<evidence type="ECO:0000269" key="11">
    <source>
    </source>
</evidence>
<evidence type="ECO:0000269" key="12">
    <source>
    </source>
</evidence>
<evidence type="ECO:0000269" key="13">
    <source>
    </source>
</evidence>
<evidence type="ECO:0000303" key="14">
    <source>
    </source>
</evidence>
<evidence type="ECO:0000305" key="15"/>
<evidence type="ECO:0000305" key="16">
    <source>
    </source>
</evidence>
<evidence type="ECO:0000305" key="17">
    <source>
    </source>
</evidence>
<evidence type="ECO:0007744" key="18">
    <source>
    </source>
</evidence>
<evidence type="ECO:0007744" key="19">
    <source>
    </source>
</evidence>
<comment type="function">
    <text evidence="13 17">Required for constitutive and alternative pre-mRNA splicing (Probable). Involved in primary miRNA processing and pri-miRNA biogenesis. Binds both intronless and intron-containing pri-miRNAs (PubMed:26227967).</text>
</comment>
<comment type="subunit">
    <text evidence="8 9 12 13 15">Component of the spliceosome (Probable). Interacts with SNRNP35 (PubMed:15987817). Interacts with CYP59 (PubMed:16497658). Interacts with RCF3 and CPL1 (PubMed:24146632). Interacts with DRB1/HYL1 and SE (PubMed:26227967).</text>
</comment>
<comment type="subcellular location">
    <subcellularLocation>
        <location evidence="12 13">Nucleus</location>
    </subcellularLocation>
    <subcellularLocation>
        <location evidence="7 11 12 13">Nucleus speckle</location>
    </subcellularLocation>
</comment>
<comment type="alternative products">
    <event type="alternative splicing"/>
    <isoform>
        <id>P92965-1</id>
        <name>1</name>
        <sequence type="displayed"/>
    </isoform>
    <isoform>
        <id>P92965-2</id>
        <name>2</name>
        <sequence type="described" ref="VSP_054980"/>
    </isoform>
    <isoform>
        <id>P92965-3</id>
        <name>3</name>
        <sequence type="described" ref="VSP_054979"/>
    </isoform>
    <text>A number of isoforms are produced. According to EST sequences.</text>
</comment>
<comment type="tissue specificity">
    <text evidence="10">Highly expressed in roots and flowers. A presumably longer alternatively spliced form is found in leaves, stems and flowers.</text>
</comment>
<comment type="disruption phenotype">
    <text evidence="12">Mutant seedlings show increased sensitivity to salt stress and abscisic acid (ABA).</text>
</comment>
<comment type="miscellaneous">
    <text evidence="16">The splicing pattern of the pre-mRNA is regulated in a tissue-specific manner and by development, and changes in response to various types of abiotic stresses.</text>
</comment>
<comment type="similarity">
    <text evidence="15">Belongs to the splicing factor SR family. RS subfamily.</text>
</comment>
<sequence length="350" mass="40319">MKPVFCGNFEYDAREGDLERLFRKYGKVERVDMKAGFAFVYMEDERDAEDAIRALDRFEFGRKGRRLRVEWTKSERGGDKRSGGGSRRSSSSMRPSKTLFVINFDADNTRTRDLEKHFEPYGKIVNVRIRRNFAFIQYEAQEDATRALDASNNSKLMDKVISVEYAVKDDDARGNGHSPERRRDRSPERRRRSPSPYKRERGSPDYGRGASPVAAYRKERTSPDYGRRRSPSPYKKSRRGSPEYGRDRRGNDSPRRRERVASPTKYSRSPNNKRERMSPNHSPFKKESPRNGVGEVESPIERRERSRSSPENGQVESPGSIGRRDSDGGYDGAESPMQKSRSPRSPPADE</sequence>
<proteinExistence type="evidence at protein level"/>
<gene>
    <name type="primary">RS40</name>
    <name type="synonym">RSP35</name>
    <name type="synonym">RSP40</name>
    <name type="ordered locus">At4g25500</name>
    <name type="ORF">M7J2.130</name>
</gene>
<organism>
    <name type="scientific">Arabidopsis thaliana</name>
    <name type="common">Mouse-ear cress</name>
    <dbReference type="NCBI Taxonomy" id="3702"/>
    <lineage>
        <taxon>Eukaryota</taxon>
        <taxon>Viridiplantae</taxon>
        <taxon>Streptophyta</taxon>
        <taxon>Embryophyta</taxon>
        <taxon>Tracheophyta</taxon>
        <taxon>Spermatophyta</taxon>
        <taxon>Magnoliopsida</taxon>
        <taxon>eudicotyledons</taxon>
        <taxon>Gunneridae</taxon>
        <taxon>Pentapetalae</taxon>
        <taxon>rosids</taxon>
        <taxon>malvids</taxon>
        <taxon>Brassicales</taxon>
        <taxon>Brassicaceae</taxon>
        <taxon>Camelineae</taxon>
        <taxon>Arabidopsis</taxon>
    </lineage>
</organism>
<accession>P92965</accession>
<accession>A8MRZ9</accession>
<accession>B9DH58</accession>
<accession>F4JSN1</accession>
<accession>Q96333</accession>